<proteinExistence type="inferred from homology"/>
<organism>
    <name type="scientific">Bacillus pumilus (strain SAFR-032)</name>
    <dbReference type="NCBI Taxonomy" id="315750"/>
    <lineage>
        <taxon>Bacteria</taxon>
        <taxon>Bacillati</taxon>
        <taxon>Bacillota</taxon>
        <taxon>Bacilli</taxon>
        <taxon>Bacillales</taxon>
        <taxon>Bacillaceae</taxon>
        <taxon>Bacillus</taxon>
    </lineage>
</organism>
<protein>
    <recommendedName>
        <fullName evidence="1">ATP phosphoribosyltransferase regulatory subunit</fullName>
    </recommendedName>
</protein>
<keyword id="KW-0028">Amino-acid biosynthesis</keyword>
<keyword id="KW-0963">Cytoplasm</keyword>
<keyword id="KW-0368">Histidine biosynthesis</keyword>
<reference key="1">
    <citation type="journal article" date="2007" name="PLoS ONE">
        <title>Paradoxical DNA repair and peroxide resistance gene conservation in Bacillus pumilus SAFR-032.</title>
        <authorList>
            <person name="Gioia J."/>
            <person name="Yerrapragada S."/>
            <person name="Qin X."/>
            <person name="Jiang H."/>
            <person name="Igboeli O.C."/>
            <person name="Muzny D."/>
            <person name="Dugan-Rocha S."/>
            <person name="Ding Y."/>
            <person name="Hawes A."/>
            <person name="Liu W."/>
            <person name="Perez L."/>
            <person name="Kovar C."/>
            <person name="Dinh H."/>
            <person name="Lee S."/>
            <person name="Nazareth L."/>
            <person name="Blyth P."/>
            <person name="Holder M."/>
            <person name="Buhay C."/>
            <person name="Tirumalai M.R."/>
            <person name="Liu Y."/>
            <person name="Dasgupta I."/>
            <person name="Bokhetache L."/>
            <person name="Fujita M."/>
            <person name="Karouia F."/>
            <person name="Eswara Moorthy P."/>
            <person name="Siefert J."/>
            <person name="Uzman A."/>
            <person name="Buzumbo P."/>
            <person name="Verma A."/>
            <person name="Zwiya H."/>
            <person name="McWilliams B.D."/>
            <person name="Olowu A."/>
            <person name="Clinkenbeard K.D."/>
            <person name="Newcombe D."/>
            <person name="Golebiewski L."/>
            <person name="Petrosino J.F."/>
            <person name="Nicholson W.L."/>
            <person name="Fox G.E."/>
            <person name="Venkateswaran K."/>
            <person name="Highlander S.K."/>
            <person name="Weinstock G.M."/>
        </authorList>
    </citation>
    <scope>NUCLEOTIDE SEQUENCE [LARGE SCALE GENOMIC DNA]</scope>
    <source>
        <strain>SAFR-032</strain>
    </source>
</reference>
<name>HISZ_BACP2</name>
<evidence type="ECO:0000255" key="1">
    <source>
        <dbReference type="HAMAP-Rule" id="MF_00125"/>
    </source>
</evidence>
<dbReference type="EMBL" id="CP000813">
    <property type="protein sequence ID" value="ABV63782.1"/>
    <property type="molecule type" value="Genomic_DNA"/>
</dbReference>
<dbReference type="RefSeq" id="WP_012011371.1">
    <property type="nucleotide sequence ID" value="NZ_VEIS01000009.1"/>
</dbReference>
<dbReference type="SMR" id="A8FHR5"/>
<dbReference type="STRING" id="315750.BPUM_3128"/>
<dbReference type="GeneID" id="5622419"/>
<dbReference type="KEGG" id="bpu:BPUM_3128"/>
<dbReference type="eggNOG" id="COG3705">
    <property type="taxonomic scope" value="Bacteria"/>
</dbReference>
<dbReference type="HOGENOM" id="CLU_025113_0_0_9"/>
<dbReference type="OrthoDB" id="9800814at2"/>
<dbReference type="UniPathway" id="UPA00031">
    <property type="reaction ID" value="UER00006"/>
</dbReference>
<dbReference type="Proteomes" id="UP000001355">
    <property type="component" value="Chromosome"/>
</dbReference>
<dbReference type="GO" id="GO:0005737">
    <property type="term" value="C:cytoplasm"/>
    <property type="evidence" value="ECO:0007669"/>
    <property type="project" value="UniProtKB-SubCell"/>
</dbReference>
<dbReference type="GO" id="GO:0140096">
    <property type="term" value="F:catalytic activity, acting on a protein"/>
    <property type="evidence" value="ECO:0007669"/>
    <property type="project" value="UniProtKB-ARBA"/>
</dbReference>
<dbReference type="GO" id="GO:0004821">
    <property type="term" value="F:histidine-tRNA ligase activity"/>
    <property type="evidence" value="ECO:0007669"/>
    <property type="project" value="InterPro"/>
</dbReference>
<dbReference type="GO" id="GO:0016740">
    <property type="term" value="F:transferase activity"/>
    <property type="evidence" value="ECO:0007669"/>
    <property type="project" value="UniProtKB-ARBA"/>
</dbReference>
<dbReference type="GO" id="GO:0006427">
    <property type="term" value="P:histidyl-tRNA aminoacylation"/>
    <property type="evidence" value="ECO:0007669"/>
    <property type="project" value="InterPro"/>
</dbReference>
<dbReference type="GO" id="GO:0000105">
    <property type="term" value="P:L-histidine biosynthetic process"/>
    <property type="evidence" value="ECO:0007669"/>
    <property type="project" value="UniProtKB-UniRule"/>
</dbReference>
<dbReference type="CDD" id="cd00773">
    <property type="entry name" value="HisRS-like_core"/>
    <property type="match status" value="1"/>
</dbReference>
<dbReference type="Gene3D" id="3.40.50.12590">
    <property type="match status" value="1"/>
</dbReference>
<dbReference type="Gene3D" id="3.30.930.10">
    <property type="entry name" value="Bira Bifunctional Protein, Domain 2"/>
    <property type="match status" value="1"/>
</dbReference>
<dbReference type="HAMAP" id="MF_00125">
    <property type="entry name" value="HisZ"/>
    <property type="match status" value="1"/>
</dbReference>
<dbReference type="InterPro" id="IPR006195">
    <property type="entry name" value="aa-tRNA-synth_II"/>
</dbReference>
<dbReference type="InterPro" id="IPR045864">
    <property type="entry name" value="aa-tRNA-synth_II/BPL/LPL"/>
</dbReference>
<dbReference type="InterPro" id="IPR041715">
    <property type="entry name" value="HisRS-like_core"/>
</dbReference>
<dbReference type="InterPro" id="IPR004516">
    <property type="entry name" value="HisRS/HisZ"/>
</dbReference>
<dbReference type="InterPro" id="IPR004517">
    <property type="entry name" value="HisZ"/>
</dbReference>
<dbReference type="InterPro" id="IPR053846">
    <property type="entry name" value="HisZ-C"/>
</dbReference>
<dbReference type="NCBIfam" id="TIGR00443">
    <property type="entry name" value="hisZ_biosyn_reg"/>
    <property type="match status" value="1"/>
</dbReference>
<dbReference type="NCBIfam" id="NF008941">
    <property type="entry name" value="PRK12292.2-4"/>
    <property type="match status" value="1"/>
</dbReference>
<dbReference type="PANTHER" id="PTHR43707:SF1">
    <property type="entry name" value="HISTIDINE--TRNA LIGASE, MITOCHONDRIAL-RELATED"/>
    <property type="match status" value="1"/>
</dbReference>
<dbReference type="PANTHER" id="PTHR43707">
    <property type="entry name" value="HISTIDYL-TRNA SYNTHETASE"/>
    <property type="match status" value="1"/>
</dbReference>
<dbReference type="Pfam" id="PF21996">
    <property type="entry name" value="HisZ-like"/>
    <property type="match status" value="1"/>
</dbReference>
<dbReference type="Pfam" id="PF13393">
    <property type="entry name" value="tRNA-synt_His"/>
    <property type="match status" value="1"/>
</dbReference>
<dbReference type="PIRSF" id="PIRSF001549">
    <property type="entry name" value="His-tRNA_synth"/>
    <property type="match status" value="1"/>
</dbReference>
<dbReference type="SUPFAM" id="SSF55681">
    <property type="entry name" value="Class II aaRS and biotin synthetases"/>
    <property type="match status" value="1"/>
</dbReference>
<dbReference type="PROSITE" id="PS50862">
    <property type="entry name" value="AA_TRNA_LIGASE_II"/>
    <property type="match status" value="1"/>
</dbReference>
<sequence>MFMFEKPYGMRDSLPGLYETKKKVRHSLTEVMNGWGYRLMETPTLEFYDTVGVQSAITDTQLFKLLDQNGQTLVLRPDMTGPIARVAASKLHEQAYPLRVGYAANVFRAQEREGGRPSEFEQVGIELIGDGSISADAEVIALVVFALKNAGLNSFKIAIGHVALAETLFVDVLGNTERANVLRRFLYEKNYVGYRQHVKQLPLSSIDKTRLLQLLELRGGREVTERAEEIVVSQEGKEVLAQLKSLWETLEDYGCTEYIRLDLSMVSHMSYYTGILFEVFADHVGSVIGSGGRYDQLLAHFNAPAPATGFGLRLDRLLEALDVKEINEPQEAVIFSKEQRLEAFAFAEKERSKGKKIVLQDLAGIENIDAMTKAFEQVTYFIGARKGEQNG</sequence>
<comment type="function">
    <text evidence="1">Required for the first step of histidine biosynthesis. May allow the feedback regulation of ATP phosphoribosyltransferase activity by histidine.</text>
</comment>
<comment type="pathway">
    <text evidence="1">Amino-acid biosynthesis; L-histidine biosynthesis; L-histidine from 5-phospho-alpha-D-ribose 1-diphosphate: step 1/9.</text>
</comment>
<comment type="subunit">
    <text evidence="1">Heteromultimer composed of HisG and HisZ subunits.</text>
</comment>
<comment type="subcellular location">
    <subcellularLocation>
        <location evidence="1">Cytoplasm</location>
    </subcellularLocation>
</comment>
<comment type="miscellaneous">
    <text>This function is generally fulfilled by the C-terminal part of HisG, which is missing in some bacteria such as this one.</text>
</comment>
<comment type="similarity">
    <text evidence="1">Belongs to the class-II aminoacyl-tRNA synthetase family. HisZ subfamily.</text>
</comment>
<gene>
    <name evidence="1" type="primary">hisZ</name>
    <name type="ordered locus">BPUM_3128</name>
</gene>
<accession>A8FHR5</accession>
<feature type="chain" id="PRO_1000057817" description="ATP phosphoribosyltransferase regulatory subunit">
    <location>
        <begin position="1"/>
        <end position="391"/>
    </location>
</feature>